<gene>
    <name evidence="1" type="primary">gyrA</name>
    <name type="ordered locus">HI_1264</name>
</gene>
<feature type="chain" id="PRO_0000145235" description="DNA gyrase subunit A">
    <location>
        <begin position="1"/>
        <end position="880"/>
    </location>
</feature>
<feature type="domain" description="Topo IIA-type catalytic" evidence="2">
    <location>
        <begin position="35"/>
        <end position="530"/>
    </location>
</feature>
<feature type="short sequence motif" description="GyrA-box" evidence="1">
    <location>
        <begin position="557"/>
        <end position="563"/>
    </location>
</feature>
<feature type="active site" description="O-(5'-phospho-DNA)-tyrosine intermediate" evidence="1">
    <location>
        <position position="123"/>
    </location>
</feature>
<reference key="1">
    <citation type="journal article" date="1995" name="Science">
        <title>Whole-genome random sequencing and assembly of Haemophilus influenzae Rd.</title>
        <authorList>
            <person name="Fleischmann R.D."/>
            <person name="Adams M.D."/>
            <person name="White O."/>
            <person name="Clayton R.A."/>
            <person name="Kirkness E.F."/>
            <person name="Kerlavage A.R."/>
            <person name="Bult C.J."/>
            <person name="Tomb J.-F."/>
            <person name="Dougherty B.A."/>
            <person name="Merrick J.M."/>
            <person name="McKenney K."/>
            <person name="Sutton G.G."/>
            <person name="FitzHugh W."/>
            <person name="Fields C.A."/>
            <person name="Gocayne J.D."/>
            <person name="Scott J.D."/>
            <person name="Shirley R."/>
            <person name="Liu L.-I."/>
            <person name="Glodek A."/>
            <person name="Kelley J.M."/>
            <person name="Weidman J.F."/>
            <person name="Phillips C.A."/>
            <person name="Spriggs T."/>
            <person name="Hedblom E."/>
            <person name="Cotton M.D."/>
            <person name="Utterback T.R."/>
            <person name="Hanna M.C."/>
            <person name="Nguyen D.T."/>
            <person name="Saudek D.M."/>
            <person name="Brandon R.C."/>
            <person name="Fine L.D."/>
            <person name="Fritchman J.L."/>
            <person name="Fuhrmann J.L."/>
            <person name="Geoghagen N.S.M."/>
            <person name="Gnehm C.L."/>
            <person name="McDonald L.A."/>
            <person name="Small K.V."/>
            <person name="Fraser C.M."/>
            <person name="Smith H.O."/>
            <person name="Venter J.C."/>
        </authorList>
    </citation>
    <scope>NUCLEOTIDE SEQUENCE [LARGE SCALE GENOMIC DNA]</scope>
    <source>
        <strain>ATCC 51907 / DSM 11121 / KW20 / Rd</strain>
    </source>
</reference>
<accession>P43700</accession>
<proteinExistence type="inferred from homology"/>
<protein>
    <recommendedName>
        <fullName evidence="1">DNA gyrase subunit A</fullName>
        <ecNumber evidence="1">5.6.2.2</ecNumber>
    </recommendedName>
</protein>
<dbReference type="EC" id="5.6.2.2" evidence="1"/>
<dbReference type="EMBL" id="L42023">
    <property type="protein sequence ID" value="AAC22917.1"/>
    <property type="molecule type" value="Genomic_DNA"/>
</dbReference>
<dbReference type="PIR" id="E64113">
    <property type="entry name" value="E64113"/>
</dbReference>
<dbReference type="RefSeq" id="NP_439419.1">
    <property type="nucleotide sequence ID" value="NC_000907.1"/>
</dbReference>
<dbReference type="SMR" id="P43700"/>
<dbReference type="STRING" id="71421.HI_1264"/>
<dbReference type="DrugBank" id="DB06771">
    <property type="generic name" value="Besifloxacin"/>
</dbReference>
<dbReference type="DrugBank" id="DB00827">
    <property type="generic name" value="Cinoxacin"/>
</dbReference>
<dbReference type="DrugBank" id="DB00537">
    <property type="generic name" value="Ciprofloxacin"/>
</dbReference>
<dbReference type="DrugBank" id="DB00467">
    <property type="generic name" value="Enoxacin"/>
</dbReference>
<dbReference type="DrugBank" id="DB09047">
    <property type="generic name" value="Finafloxacin"/>
</dbReference>
<dbReference type="DrugBank" id="DB04576">
    <property type="generic name" value="Fleroxacin"/>
</dbReference>
<dbReference type="DrugBank" id="DB01155">
    <property type="generic name" value="Gemifloxacin"/>
</dbReference>
<dbReference type="DrugBank" id="DB00365">
    <property type="generic name" value="Grepafloxacin"/>
</dbReference>
<dbReference type="DrugBank" id="DB01137">
    <property type="generic name" value="Levofloxacin"/>
</dbReference>
<dbReference type="DrugBank" id="DB00978">
    <property type="generic name" value="Lomefloxacin"/>
</dbReference>
<dbReference type="DrugBank" id="DB00218">
    <property type="generic name" value="Moxifloxacin"/>
</dbReference>
<dbReference type="DrugBank" id="DB01059">
    <property type="generic name" value="Norfloxacin"/>
</dbReference>
<dbReference type="DrugBank" id="DB01165">
    <property type="generic name" value="Ofloxacin"/>
</dbReference>
<dbReference type="DrugBank" id="DB12924">
    <property type="generic name" value="Ozenoxacin"/>
</dbReference>
<dbReference type="DrugBank" id="DB00487">
    <property type="generic name" value="Pefloxacin"/>
</dbReference>
<dbReference type="DrugBank" id="DB01208">
    <property type="generic name" value="Sparfloxacin"/>
</dbReference>
<dbReference type="DrugBank" id="DB01405">
    <property type="generic name" value="Temafloxacin"/>
</dbReference>
<dbReference type="DrugBank" id="DB00685">
    <property type="generic name" value="Trovafloxacin"/>
</dbReference>
<dbReference type="DrugCentral" id="P43700"/>
<dbReference type="EnsemblBacteria" id="AAC22917">
    <property type="protein sequence ID" value="AAC22917"/>
    <property type="gene ID" value="HI_1264"/>
</dbReference>
<dbReference type="KEGG" id="hin:HI_1264"/>
<dbReference type="PATRIC" id="fig|71421.8.peg.1316"/>
<dbReference type="eggNOG" id="COG0188">
    <property type="taxonomic scope" value="Bacteria"/>
</dbReference>
<dbReference type="HOGENOM" id="CLU_002977_6_1_6"/>
<dbReference type="OrthoDB" id="9806486at2"/>
<dbReference type="PhylomeDB" id="P43700"/>
<dbReference type="BioCyc" id="HINF71421:G1GJ1-1292-MONOMER"/>
<dbReference type="Proteomes" id="UP000000579">
    <property type="component" value="Chromosome"/>
</dbReference>
<dbReference type="GO" id="GO:0005694">
    <property type="term" value="C:chromosome"/>
    <property type="evidence" value="ECO:0007669"/>
    <property type="project" value="InterPro"/>
</dbReference>
<dbReference type="GO" id="GO:0005737">
    <property type="term" value="C:cytoplasm"/>
    <property type="evidence" value="ECO:0000318"/>
    <property type="project" value="GO_Central"/>
</dbReference>
<dbReference type="GO" id="GO:0009330">
    <property type="term" value="C:DNA topoisomerase type II (double strand cut, ATP-hydrolyzing) complex"/>
    <property type="evidence" value="ECO:0000318"/>
    <property type="project" value="GO_Central"/>
</dbReference>
<dbReference type="GO" id="GO:0005524">
    <property type="term" value="F:ATP binding"/>
    <property type="evidence" value="ECO:0000318"/>
    <property type="project" value="GO_Central"/>
</dbReference>
<dbReference type="GO" id="GO:0003677">
    <property type="term" value="F:DNA binding"/>
    <property type="evidence" value="ECO:0000318"/>
    <property type="project" value="GO_Central"/>
</dbReference>
<dbReference type="GO" id="GO:0034335">
    <property type="term" value="F:DNA negative supercoiling activity"/>
    <property type="evidence" value="ECO:0007669"/>
    <property type="project" value="UniProtKB-ARBA"/>
</dbReference>
<dbReference type="GO" id="GO:0006265">
    <property type="term" value="P:DNA topological change"/>
    <property type="evidence" value="ECO:0000318"/>
    <property type="project" value="GO_Central"/>
</dbReference>
<dbReference type="GO" id="GO:0006261">
    <property type="term" value="P:DNA-templated DNA replication"/>
    <property type="evidence" value="ECO:0007669"/>
    <property type="project" value="UniProtKB-UniRule"/>
</dbReference>
<dbReference type="CDD" id="cd00187">
    <property type="entry name" value="TOP4c"/>
    <property type="match status" value="1"/>
</dbReference>
<dbReference type="FunFam" id="2.120.10.90:FF:000002">
    <property type="entry name" value="DNA gyrase subunit A"/>
    <property type="match status" value="1"/>
</dbReference>
<dbReference type="FunFam" id="3.30.1360.40:FF:000002">
    <property type="entry name" value="DNA gyrase subunit A"/>
    <property type="match status" value="1"/>
</dbReference>
<dbReference type="FunFam" id="3.90.199.10:FF:000001">
    <property type="entry name" value="DNA gyrase subunit A"/>
    <property type="match status" value="1"/>
</dbReference>
<dbReference type="Gene3D" id="3.30.1360.40">
    <property type="match status" value="1"/>
</dbReference>
<dbReference type="Gene3D" id="2.120.10.90">
    <property type="entry name" value="DNA gyrase/topoisomerase IV, subunit A, C-terminal"/>
    <property type="match status" value="1"/>
</dbReference>
<dbReference type="Gene3D" id="3.90.199.10">
    <property type="entry name" value="Topoisomerase II, domain 5"/>
    <property type="match status" value="1"/>
</dbReference>
<dbReference type="Gene3D" id="1.10.268.10">
    <property type="entry name" value="Topoisomerase, domain 3"/>
    <property type="match status" value="1"/>
</dbReference>
<dbReference type="HAMAP" id="MF_01897">
    <property type="entry name" value="GyrA"/>
    <property type="match status" value="1"/>
</dbReference>
<dbReference type="InterPro" id="IPR005743">
    <property type="entry name" value="GyrA"/>
</dbReference>
<dbReference type="InterPro" id="IPR006691">
    <property type="entry name" value="GyrA/parC_rep"/>
</dbReference>
<dbReference type="InterPro" id="IPR035516">
    <property type="entry name" value="Gyrase/topoIV_suA_C"/>
</dbReference>
<dbReference type="InterPro" id="IPR013760">
    <property type="entry name" value="Topo_IIA-like_dom_sf"/>
</dbReference>
<dbReference type="InterPro" id="IPR013758">
    <property type="entry name" value="Topo_IIA_A/C_ab"/>
</dbReference>
<dbReference type="InterPro" id="IPR013757">
    <property type="entry name" value="Topo_IIA_A_a_sf"/>
</dbReference>
<dbReference type="InterPro" id="IPR002205">
    <property type="entry name" value="Topo_IIA_dom_A"/>
</dbReference>
<dbReference type="InterPro" id="IPR050220">
    <property type="entry name" value="Type_II_DNA_Topoisomerases"/>
</dbReference>
<dbReference type="NCBIfam" id="TIGR01063">
    <property type="entry name" value="gyrA"/>
    <property type="match status" value="1"/>
</dbReference>
<dbReference type="NCBIfam" id="NF004043">
    <property type="entry name" value="PRK05560.1"/>
    <property type="match status" value="1"/>
</dbReference>
<dbReference type="NCBIfam" id="NF004044">
    <property type="entry name" value="PRK05561.1"/>
    <property type="match status" value="1"/>
</dbReference>
<dbReference type="PANTHER" id="PTHR43493:SF5">
    <property type="entry name" value="DNA GYRASE SUBUNIT A, CHLOROPLASTIC_MITOCHONDRIAL"/>
    <property type="match status" value="1"/>
</dbReference>
<dbReference type="PANTHER" id="PTHR43493">
    <property type="entry name" value="DNA GYRASE/TOPOISOMERASE SUBUNIT A"/>
    <property type="match status" value="1"/>
</dbReference>
<dbReference type="Pfam" id="PF03989">
    <property type="entry name" value="DNA_gyraseA_C"/>
    <property type="match status" value="6"/>
</dbReference>
<dbReference type="Pfam" id="PF00521">
    <property type="entry name" value="DNA_topoisoIV"/>
    <property type="match status" value="1"/>
</dbReference>
<dbReference type="SMART" id="SM00434">
    <property type="entry name" value="TOP4c"/>
    <property type="match status" value="1"/>
</dbReference>
<dbReference type="SUPFAM" id="SSF101904">
    <property type="entry name" value="GyrA/ParC C-terminal domain-like"/>
    <property type="match status" value="1"/>
</dbReference>
<dbReference type="SUPFAM" id="SSF56719">
    <property type="entry name" value="Type II DNA topoisomerase"/>
    <property type="match status" value="1"/>
</dbReference>
<dbReference type="PROSITE" id="PS52040">
    <property type="entry name" value="TOPO_IIA"/>
    <property type="match status" value="1"/>
</dbReference>
<organism>
    <name type="scientific">Haemophilus influenzae (strain ATCC 51907 / DSM 11121 / KW20 / Rd)</name>
    <dbReference type="NCBI Taxonomy" id="71421"/>
    <lineage>
        <taxon>Bacteria</taxon>
        <taxon>Pseudomonadati</taxon>
        <taxon>Pseudomonadota</taxon>
        <taxon>Gammaproteobacteria</taxon>
        <taxon>Pasteurellales</taxon>
        <taxon>Pasteurellaceae</taxon>
        <taxon>Haemophilus</taxon>
    </lineage>
</organism>
<evidence type="ECO:0000255" key="1">
    <source>
        <dbReference type="HAMAP-Rule" id="MF_01897"/>
    </source>
</evidence>
<evidence type="ECO:0000255" key="2">
    <source>
        <dbReference type="PROSITE-ProRule" id="PRU01384"/>
    </source>
</evidence>
<comment type="function">
    <text evidence="1">A type II topoisomerase that negatively supercoils closed circular double-stranded (ds) DNA in an ATP-dependent manner to modulate DNA topology and maintain chromosomes in an underwound state. Negative supercoiling favors strand separation, and DNA replication, transcription, recombination and repair, all of which involve strand separation. Also able to catalyze the interconversion of other topological isomers of dsDNA rings, including catenanes and knotted rings. Type II topoisomerases break and join 2 DNA strands simultaneously in an ATP-dependent manner.</text>
</comment>
<comment type="catalytic activity">
    <reaction evidence="1">
        <text>ATP-dependent breakage, passage and rejoining of double-stranded DNA.</text>
        <dbReference type="EC" id="5.6.2.2"/>
    </reaction>
</comment>
<comment type="subunit">
    <text evidence="1">Heterotetramer, composed of two GyrA and two GyrB chains. In the heterotetramer, GyrA contains the active site tyrosine that forms a transient covalent intermediate with DNA, while GyrB binds cofactors and catalyzes ATP hydrolysis.</text>
</comment>
<comment type="subcellular location">
    <subcellularLocation>
        <location evidence="1">Cytoplasm</location>
    </subcellularLocation>
</comment>
<comment type="miscellaneous">
    <text evidence="1">Few gyrases are as efficient as E.coli at forming negative supercoils. Not all organisms have 2 type II topoisomerases; in organisms with a single type II topoisomerase this enzyme also has to decatenate newly replicated chromosomes.</text>
</comment>
<comment type="similarity">
    <text evidence="1">Belongs to the type II topoisomerase GyrA/ParC subunit family.</text>
</comment>
<keyword id="KW-0067">ATP-binding</keyword>
<keyword id="KW-0963">Cytoplasm</keyword>
<keyword id="KW-0238">DNA-binding</keyword>
<keyword id="KW-0413">Isomerase</keyword>
<keyword id="KW-0547">Nucleotide-binding</keyword>
<keyword id="KW-1185">Reference proteome</keyword>
<keyword id="KW-0799">Topoisomerase</keyword>
<name>GYRA_HAEIN</name>
<sequence length="880" mass="97818">MTDSIQSSITPVNIEEELKSSYLDYAMSVIVGRALPDVRDGLKPVHRRVLFSMDREGNTANKKYVKSARVVGDVIGKYHPHGDSAVYDTIVRMAQPFSLRYMLVDGQGNFGSIDGDAPAAMRYTEVRMQKITQALLTDLDKETVNFSPNYDGELMIPDVLPTRIPALLANGSSGIAVGMATNIPPHNLNEVLNGCLAYIDKNEITIDELMQHIPGPDFPTAALINGRKGIEEAYRTGRGKVYVRARATVETNEKGREQIIVSELPYQVNKAKLVEKIAELIREKKIEGISNITDLSNKEGIRIEIDIKRDAVGEVVLNHLYSLTQMQVTFGINMVALDHGQPRLFNLKEIIEAFVLHRREVVTRRSIFELRKARERTHILEGLAVARSNIDEMIAIIRNSKNREEAATSISSRSWTLHSDIINLLDASARPDELEENLGIQGEQYYLSPAQVNAILELRLHRLTGIAFEEVIKEYEELLVKIADLLHILSSAERLMEVIREELEEVKAQFGDDRLTEITAASGDIDLEDLIAQEDVVVTLSHEGYVKYQPLTDYEAQRRGGKGKSATKMKEEDFIEKLLVANTHDTILCFSSRGRLYWLKVYQLPQASRGARGRPIVNILPLQENERITAILPVSAYEEDKFVVMATAGGIVKKIALTEFSRPRSNGIIALNLRDEDELIGVDITDGSNEIMLFSSQGRVVRFAENAVRAMGRLATGVRGIKLALTNDISDDESAVEIEDISDDNAEASLDLNIDKVVSLVVPKGEGAILTATQNGYGKRTQLSEYPTKSRNTKGVISIKVSERNGKVVAATQVEETDQIMLITDAGTLVRTRVSEVSIVGRNTQGVRLIRTADDEHVVSLERVCDADEDDSLEESSSEE</sequence>